<reference key="1">
    <citation type="journal article" date="2008" name="Environ. Microbiol.">
        <title>The genome of Erwinia tasmaniensis strain Et1/99, a non-pathogenic bacterium in the genus Erwinia.</title>
        <authorList>
            <person name="Kube M."/>
            <person name="Migdoll A.M."/>
            <person name="Mueller I."/>
            <person name="Kuhl H."/>
            <person name="Beck A."/>
            <person name="Reinhardt R."/>
            <person name="Geider K."/>
        </authorList>
    </citation>
    <scope>NUCLEOTIDE SEQUENCE [LARGE SCALE GENOMIC DNA]</scope>
    <source>
        <strain>DSM 17950 / CFBP 7177 / CIP 109463 / NCPPB 4357 / Et1/99</strain>
    </source>
</reference>
<sequence>MAAKDVKFGNDARVKMLRGVNVLADAVKVTLGPKGRNVVLDKSFGAPTITKDGVSVAREIELEDKFENMGAQMVKEVASKANDAAGDGTTTATVLAQSIVNEGLKAVAAGMNPMDLKRGIDKAVIAAVEELKKLSVPCSDSKAIAQVGTISANSDETVGELIALAMEKVGKEGVITVEEGTGLQDELDVVEGMQFDRGYLSPYFINKPETGAVELESPFILLADKKISNIRELLPVLEAVAKAGKPLLIVAEDVEGEALATLVVNTMRGIVKVAAVKAPGFGDRRKAMLQDIAVLTGGTVISEEIGMELEKAGLEDMGQAKRVVISKDTTTIIDGTGEEVAISGRVTQIRQQIEDATSDYDREKLQERVAKLAGGVAVLKVGAATEVEMKEKKARVEDALHATRAAVEEGVVAGGGVALVRVAAMLTELRGQNEDQNVGIKVALRAMESPLRQIVSNAGEEPSVVTNAVKAGEGNYGYNAQTEEYGNMIDFGILDPTKVTRSALQYAASVAGLMITTECMVTDLPKGDAPDLGAGGGMGGMGGMGGMM</sequence>
<comment type="function">
    <text evidence="1">Together with its co-chaperonin GroES, plays an essential role in assisting protein folding. The GroEL-GroES system forms a nano-cage that allows encapsulation of the non-native substrate proteins and provides a physical environment optimized to promote and accelerate protein folding.</text>
</comment>
<comment type="catalytic activity">
    <reaction evidence="1">
        <text>ATP + H2O + a folded polypeptide = ADP + phosphate + an unfolded polypeptide.</text>
        <dbReference type="EC" id="5.6.1.7"/>
    </reaction>
</comment>
<comment type="subunit">
    <text evidence="1">Forms a cylinder of 14 subunits composed of two heptameric rings stacked back-to-back. Interacts with the co-chaperonin GroES.</text>
</comment>
<comment type="subcellular location">
    <subcellularLocation>
        <location evidence="1">Cytoplasm</location>
    </subcellularLocation>
</comment>
<comment type="similarity">
    <text evidence="1">Belongs to the chaperonin (HSP60) family.</text>
</comment>
<name>CH60_ERWT9</name>
<feature type="chain" id="PRO_1000130015" description="Chaperonin GroEL">
    <location>
        <begin position="1"/>
        <end position="548"/>
    </location>
</feature>
<feature type="binding site" evidence="1">
    <location>
        <begin position="30"/>
        <end position="33"/>
    </location>
    <ligand>
        <name>ATP</name>
        <dbReference type="ChEBI" id="CHEBI:30616"/>
    </ligand>
</feature>
<feature type="binding site" evidence="1">
    <location>
        <position position="51"/>
    </location>
    <ligand>
        <name>ATP</name>
        <dbReference type="ChEBI" id="CHEBI:30616"/>
    </ligand>
</feature>
<feature type="binding site" evidence="1">
    <location>
        <begin position="87"/>
        <end position="91"/>
    </location>
    <ligand>
        <name>ATP</name>
        <dbReference type="ChEBI" id="CHEBI:30616"/>
    </ligand>
</feature>
<feature type="binding site" evidence="1">
    <location>
        <position position="415"/>
    </location>
    <ligand>
        <name>ATP</name>
        <dbReference type="ChEBI" id="CHEBI:30616"/>
    </ligand>
</feature>
<feature type="binding site" evidence="1">
    <location>
        <position position="495"/>
    </location>
    <ligand>
        <name>ATP</name>
        <dbReference type="ChEBI" id="CHEBI:30616"/>
    </ligand>
</feature>
<evidence type="ECO:0000255" key="1">
    <source>
        <dbReference type="HAMAP-Rule" id="MF_00600"/>
    </source>
</evidence>
<gene>
    <name evidence="1" type="primary">groEL</name>
    <name evidence="1" type="synonym">groL</name>
    <name type="ordered locus">ETA_29830</name>
</gene>
<dbReference type="EC" id="5.6.1.7" evidence="1"/>
<dbReference type="EMBL" id="CU468135">
    <property type="protein sequence ID" value="CAO98029.1"/>
    <property type="molecule type" value="Genomic_DNA"/>
</dbReference>
<dbReference type="RefSeq" id="WP_012442681.1">
    <property type="nucleotide sequence ID" value="NC_010694.1"/>
</dbReference>
<dbReference type="SMR" id="B2VL84"/>
<dbReference type="STRING" id="465817.ETA_29830"/>
<dbReference type="KEGG" id="eta:ETA_29830"/>
<dbReference type="eggNOG" id="COG0459">
    <property type="taxonomic scope" value="Bacteria"/>
</dbReference>
<dbReference type="HOGENOM" id="CLU_016503_3_0_6"/>
<dbReference type="OrthoDB" id="9766614at2"/>
<dbReference type="Proteomes" id="UP000001726">
    <property type="component" value="Chromosome"/>
</dbReference>
<dbReference type="GO" id="GO:0005737">
    <property type="term" value="C:cytoplasm"/>
    <property type="evidence" value="ECO:0007669"/>
    <property type="project" value="UniProtKB-SubCell"/>
</dbReference>
<dbReference type="GO" id="GO:0005524">
    <property type="term" value="F:ATP binding"/>
    <property type="evidence" value="ECO:0007669"/>
    <property type="project" value="UniProtKB-UniRule"/>
</dbReference>
<dbReference type="GO" id="GO:0140662">
    <property type="term" value="F:ATP-dependent protein folding chaperone"/>
    <property type="evidence" value="ECO:0007669"/>
    <property type="project" value="InterPro"/>
</dbReference>
<dbReference type="GO" id="GO:0016853">
    <property type="term" value="F:isomerase activity"/>
    <property type="evidence" value="ECO:0007669"/>
    <property type="project" value="UniProtKB-KW"/>
</dbReference>
<dbReference type="GO" id="GO:0051082">
    <property type="term" value="F:unfolded protein binding"/>
    <property type="evidence" value="ECO:0007669"/>
    <property type="project" value="UniProtKB-UniRule"/>
</dbReference>
<dbReference type="GO" id="GO:0042026">
    <property type="term" value="P:protein refolding"/>
    <property type="evidence" value="ECO:0007669"/>
    <property type="project" value="UniProtKB-UniRule"/>
</dbReference>
<dbReference type="CDD" id="cd03344">
    <property type="entry name" value="GroEL"/>
    <property type="match status" value="1"/>
</dbReference>
<dbReference type="FunFam" id="1.10.560.10:FF:000001">
    <property type="entry name" value="60 kDa chaperonin"/>
    <property type="match status" value="1"/>
</dbReference>
<dbReference type="FunFam" id="3.50.7.10:FF:000001">
    <property type="entry name" value="60 kDa chaperonin"/>
    <property type="match status" value="1"/>
</dbReference>
<dbReference type="Gene3D" id="3.50.7.10">
    <property type="entry name" value="GroEL"/>
    <property type="match status" value="1"/>
</dbReference>
<dbReference type="Gene3D" id="1.10.560.10">
    <property type="entry name" value="GroEL-like equatorial domain"/>
    <property type="match status" value="1"/>
</dbReference>
<dbReference type="Gene3D" id="3.30.260.10">
    <property type="entry name" value="TCP-1-like chaperonin intermediate domain"/>
    <property type="match status" value="1"/>
</dbReference>
<dbReference type="HAMAP" id="MF_00600">
    <property type="entry name" value="CH60"/>
    <property type="match status" value="1"/>
</dbReference>
<dbReference type="InterPro" id="IPR018370">
    <property type="entry name" value="Chaperonin_Cpn60_CS"/>
</dbReference>
<dbReference type="InterPro" id="IPR001844">
    <property type="entry name" value="Cpn60/GroEL"/>
</dbReference>
<dbReference type="InterPro" id="IPR002423">
    <property type="entry name" value="Cpn60/GroEL/TCP-1"/>
</dbReference>
<dbReference type="InterPro" id="IPR027409">
    <property type="entry name" value="GroEL-like_apical_dom_sf"/>
</dbReference>
<dbReference type="InterPro" id="IPR027413">
    <property type="entry name" value="GROEL-like_equatorial_sf"/>
</dbReference>
<dbReference type="InterPro" id="IPR027410">
    <property type="entry name" value="TCP-1-like_intermed_sf"/>
</dbReference>
<dbReference type="NCBIfam" id="TIGR02348">
    <property type="entry name" value="GroEL"/>
    <property type="match status" value="1"/>
</dbReference>
<dbReference type="NCBIfam" id="NF000592">
    <property type="entry name" value="PRK00013.1"/>
    <property type="match status" value="1"/>
</dbReference>
<dbReference type="NCBIfam" id="NF009487">
    <property type="entry name" value="PRK12849.1"/>
    <property type="match status" value="1"/>
</dbReference>
<dbReference type="NCBIfam" id="NF009488">
    <property type="entry name" value="PRK12850.1"/>
    <property type="match status" value="1"/>
</dbReference>
<dbReference type="NCBIfam" id="NF009489">
    <property type="entry name" value="PRK12851.1"/>
    <property type="match status" value="1"/>
</dbReference>
<dbReference type="PANTHER" id="PTHR45633">
    <property type="entry name" value="60 KDA HEAT SHOCK PROTEIN, MITOCHONDRIAL"/>
    <property type="match status" value="1"/>
</dbReference>
<dbReference type="Pfam" id="PF00118">
    <property type="entry name" value="Cpn60_TCP1"/>
    <property type="match status" value="1"/>
</dbReference>
<dbReference type="PRINTS" id="PR00298">
    <property type="entry name" value="CHAPERONIN60"/>
</dbReference>
<dbReference type="SUPFAM" id="SSF52029">
    <property type="entry name" value="GroEL apical domain-like"/>
    <property type="match status" value="1"/>
</dbReference>
<dbReference type="SUPFAM" id="SSF48592">
    <property type="entry name" value="GroEL equatorial domain-like"/>
    <property type="match status" value="1"/>
</dbReference>
<dbReference type="SUPFAM" id="SSF54849">
    <property type="entry name" value="GroEL-intermediate domain like"/>
    <property type="match status" value="1"/>
</dbReference>
<dbReference type="PROSITE" id="PS00296">
    <property type="entry name" value="CHAPERONINS_CPN60"/>
    <property type="match status" value="1"/>
</dbReference>
<keyword id="KW-0067">ATP-binding</keyword>
<keyword id="KW-0143">Chaperone</keyword>
<keyword id="KW-0963">Cytoplasm</keyword>
<keyword id="KW-0413">Isomerase</keyword>
<keyword id="KW-0547">Nucleotide-binding</keyword>
<keyword id="KW-1185">Reference proteome</keyword>
<accession>B2VL84</accession>
<proteinExistence type="inferred from homology"/>
<protein>
    <recommendedName>
        <fullName evidence="1">Chaperonin GroEL</fullName>
        <ecNumber evidence="1">5.6.1.7</ecNumber>
    </recommendedName>
    <alternativeName>
        <fullName evidence="1">60 kDa chaperonin</fullName>
    </alternativeName>
    <alternativeName>
        <fullName evidence="1">Chaperonin-60</fullName>
        <shortName evidence="1">Cpn60</shortName>
    </alternativeName>
</protein>
<organism>
    <name type="scientific">Erwinia tasmaniensis (strain DSM 17950 / CFBP 7177 / CIP 109463 / NCPPB 4357 / Et1/99)</name>
    <dbReference type="NCBI Taxonomy" id="465817"/>
    <lineage>
        <taxon>Bacteria</taxon>
        <taxon>Pseudomonadati</taxon>
        <taxon>Pseudomonadota</taxon>
        <taxon>Gammaproteobacteria</taxon>
        <taxon>Enterobacterales</taxon>
        <taxon>Erwiniaceae</taxon>
        <taxon>Erwinia</taxon>
    </lineage>
</organism>